<protein>
    <recommendedName>
        <fullName evidence="1">ATP synthase gamma chain</fullName>
    </recommendedName>
    <alternativeName>
        <fullName evidence="1">ATP synthase F1 sector gamma subunit</fullName>
    </alternativeName>
    <alternativeName>
        <fullName evidence="1">F-ATPase gamma subunit</fullName>
    </alternativeName>
</protein>
<evidence type="ECO:0000255" key="1">
    <source>
        <dbReference type="HAMAP-Rule" id="MF_00815"/>
    </source>
</evidence>
<keyword id="KW-0066">ATP synthesis</keyword>
<keyword id="KW-0997">Cell inner membrane</keyword>
<keyword id="KW-1003">Cell membrane</keyword>
<keyword id="KW-0139">CF(1)</keyword>
<keyword id="KW-0375">Hydrogen ion transport</keyword>
<keyword id="KW-0406">Ion transport</keyword>
<keyword id="KW-0472">Membrane</keyword>
<keyword id="KW-0813">Transport</keyword>
<accession>Q663Q7</accession>
<reference key="1">
    <citation type="journal article" date="2004" name="Proc. Natl. Acad. Sci. U.S.A.">
        <title>Insights into the evolution of Yersinia pestis through whole-genome comparison with Yersinia pseudotuberculosis.</title>
        <authorList>
            <person name="Chain P.S.G."/>
            <person name="Carniel E."/>
            <person name="Larimer F.W."/>
            <person name="Lamerdin J."/>
            <person name="Stoutland P.O."/>
            <person name="Regala W.M."/>
            <person name="Georgescu A.M."/>
            <person name="Vergez L.M."/>
            <person name="Land M.L."/>
            <person name="Motin V.L."/>
            <person name="Brubaker R.R."/>
            <person name="Fowler J."/>
            <person name="Hinnebusch J."/>
            <person name="Marceau M."/>
            <person name="Medigue C."/>
            <person name="Simonet M."/>
            <person name="Chenal-Francisque V."/>
            <person name="Souza B."/>
            <person name="Dacheux D."/>
            <person name="Elliott J.M."/>
            <person name="Derbise A."/>
            <person name="Hauser L.J."/>
            <person name="Garcia E."/>
        </authorList>
    </citation>
    <scope>NUCLEOTIDE SEQUENCE [LARGE SCALE GENOMIC DNA]</scope>
    <source>
        <strain>IP32953</strain>
    </source>
</reference>
<gene>
    <name evidence="1" type="primary">atpG</name>
    <name type="ordered locus">YPTB3968</name>
</gene>
<organism>
    <name type="scientific">Yersinia pseudotuberculosis serotype I (strain IP32953)</name>
    <dbReference type="NCBI Taxonomy" id="273123"/>
    <lineage>
        <taxon>Bacteria</taxon>
        <taxon>Pseudomonadati</taxon>
        <taxon>Pseudomonadota</taxon>
        <taxon>Gammaproteobacteria</taxon>
        <taxon>Enterobacterales</taxon>
        <taxon>Yersiniaceae</taxon>
        <taxon>Yersinia</taxon>
    </lineage>
</organism>
<dbReference type="EMBL" id="BX936398">
    <property type="protein sequence ID" value="CAH23206.1"/>
    <property type="molecule type" value="Genomic_DNA"/>
</dbReference>
<dbReference type="RefSeq" id="WP_002220756.1">
    <property type="nucleotide sequence ID" value="NZ_CP009712.1"/>
</dbReference>
<dbReference type="SMR" id="Q663Q7"/>
<dbReference type="GeneID" id="96663460"/>
<dbReference type="KEGG" id="ypo:BZ17_2607"/>
<dbReference type="KEGG" id="yps:YPTB3968"/>
<dbReference type="PATRIC" id="fig|273123.14.peg.2733"/>
<dbReference type="Proteomes" id="UP000001011">
    <property type="component" value="Chromosome"/>
</dbReference>
<dbReference type="GO" id="GO:0005886">
    <property type="term" value="C:plasma membrane"/>
    <property type="evidence" value="ECO:0007669"/>
    <property type="project" value="UniProtKB-SubCell"/>
</dbReference>
<dbReference type="GO" id="GO:0045259">
    <property type="term" value="C:proton-transporting ATP synthase complex"/>
    <property type="evidence" value="ECO:0007669"/>
    <property type="project" value="UniProtKB-KW"/>
</dbReference>
<dbReference type="GO" id="GO:0005524">
    <property type="term" value="F:ATP binding"/>
    <property type="evidence" value="ECO:0007669"/>
    <property type="project" value="UniProtKB-UniRule"/>
</dbReference>
<dbReference type="GO" id="GO:0046933">
    <property type="term" value="F:proton-transporting ATP synthase activity, rotational mechanism"/>
    <property type="evidence" value="ECO:0007669"/>
    <property type="project" value="UniProtKB-UniRule"/>
</dbReference>
<dbReference type="GO" id="GO:0042777">
    <property type="term" value="P:proton motive force-driven plasma membrane ATP synthesis"/>
    <property type="evidence" value="ECO:0007669"/>
    <property type="project" value="UniProtKB-UniRule"/>
</dbReference>
<dbReference type="CDD" id="cd12151">
    <property type="entry name" value="F1-ATPase_gamma"/>
    <property type="match status" value="1"/>
</dbReference>
<dbReference type="FunFam" id="1.10.287.80:FF:000005">
    <property type="entry name" value="ATP synthase gamma chain"/>
    <property type="match status" value="2"/>
</dbReference>
<dbReference type="FunFam" id="3.40.1380.10:FF:000001">
    <property type="entry name" value="ATP synthase gamma chain"/>
    <property type="match status" value="1"/>
</dbReference>
<dbReference type="Gene3D" id="3.40.1380.10">
    <property type="match status" value="1"/>
</dbReference>
<dbReference type="Gene3D" id="1.10.287.80">
    <property type="entry name" value="ATP synthase, gamma subunit, helix hairpin domain"/>
    <property type="match status" value="1"/>
</dbReference>
<dbReference type="HAMAP" id="MF_00815">
    <property type="entry name" value="ATP_synth_gamma_bact"/>
    <property type="match status" value="1"/>
</dbReference>
<dbReference type="InterPro" id="IPR035968">
    <property type="entry name" value="ATP_synth_F1_ATPase_gsu"/>
</dbReference>
<dbReference type="InterPro" id="IPR000131">
    <property type="entry name" value="ATP_synth_F1_gsu"/>
</dbReference>
<dbReference type="InterPro" id="IPR023632">
    <property type="entry name" value="ATP_synth_F1_gsu_CS"/>
</dbReference>
<dbReference type="NCBIfam" id="TIGR01146">
    <property type="entry name" value="ATPsyn_F1gamma"/>
    <property type="match status" value="1"/>
</dbReference>
<dbReference type="NCBIfam" id="NF004144">
    <property type="entry name" value="PRK05621.1-1"/>
    <property type="match status" value="1"/>
</dbReference>
<dbReference type="PANTHER" id="PTHR11693">
    <property type="entry name" value="ATP SYNTHASE GAMMA CHAIN"/>
    <property type="match status" value="1"/>
</dbReference>
<dbReference type="PANTHER" id="PTHR11693:SF22">
    <property type="entry name" value="ATP SYNTHASE SUBUNIT GAMMA, MITOCHONDRIAL"/>
    <property type="match status" value="1"/>
</dbReference>
<dbReference type="Pfam" id="PF00231">
    <property type="entry name" value="ATP-synt"/>
    <property type="match status" value="1"/>
</dbReference>
<dbReference type="PRINTS" id="PR00126">
    <property type="entry name" value="ATPASEGAMMA"/>
</dbReference>
<dbReference type="SUPFAM" id="SSF52943">
    <property type="entry name" value="ATP synthase (F1-ATPase), gamma subunit"/>
    <property type="match status" value="1"/>
</dbReference>
<dbReference type="PROSITE" id="PS00153">
    <property type="entry name" value="ATPASE_GAMMA"/>
    <property type="match status" value="1"/>
</dbReference>
<feature type="chain" id="PRO_0000073427" description="ATP synthase gamma chain">
    <location>
        <begin position="1"/>
        <end position="287"/>
    </location>
</feature>
<proteinExistence type="inferred from homology"/>
<comment type="function">
    <text evidence="1">Produces ATP from ADP in the presence of a proton gradient across the membrane. The gamma chain is believed to be important in regulating ATPase activity and the flow of protons through the CF(0) complex.</text>
</comment>
<comment type="subunit">
    <text evidence="1">F-type ATPases have 2 components, CF(1) - the catalytic core - and CF(0) - the membrane proton channel. CF(1) has five subunits: alpha(3), beta(3), gamma(1), delta(1), epsilon(1). CF(0) has three main subunits: a, b and c.</text>
</comment>
<comment type="subcellular location">
    <subcellularLocation>
        <location evidence="1">Cell inner membrane</location>
        <topology evidence="1">Peripheral membrane protein</topology>
    </subcellularLocation>
</comment>
<comment type="similarity">
    <text evidence="1">Belongs to the ATPase gamma chain family.</text>
</comment>
<name>ATPG_YERPS</name>
<sequence length="287" mass="31578">MAGAKEIRSKIASVQNTQKITKAMEMVAASKMRKSQERMAASRPYAETMRSVIGHLALGNLEYKHPYLEERDVKRVGYLVVSTDRGLCGGLNINLFKRLLAEMKGWSEKGVECDLALIGSKAASFFGSVGGKIVAQVTGMGDNPSLSELIGPVKVMLQAYDEGRLDKLYIVNNKFINTMSQEPRIMQLLPLPPAEDGELKKKSWDYLYEPDPKALLDTLLRRYVESQVYQGVVENLASEQAARMVAMKAATDNGGSLIKELQLVYNKARQASITQELTEIVGGASAV</sequence>